<protein>
    <recommendedName>
        <fullName evidence="1">Large ribosomal subunit protein bL31</fullName>
    </recommendedName>
    <alternativeName>
        <fullName evidence="2">50S ribosomal protein L31</fullName>
    </alternativeName>
</protein>
<sequence length="81" mass="8860">MKTGIHPDYVETTVQCGCGNTFTTRSTKKTGNIVVEVCSQCHPFYTGKQKILDSGGRVARFEKRYGKRGANKAANTDSADK</sequence>
<dbReference type="EMBL" id="CP000518">
    <property type="protein sequence ID" value="ABL93154.1"/>
    <property type="molecule type" value="Genomic_DNA"/>
</dbReference>
<dbReference type="SMR" id="A1UJZ6"/>
<dbReference type="STRING" id="189918.Mkms_3962"/>
<dbReference type="KEGG" id="mkm:Mkms_3962"/>
<dbReference type="HOGENOM" id="CLU_114306_4_3_11"/>
<dbReference type="OrthoDB" id="9803251at2"/>
<dbReference type="GO" id="GO:1990904">
    <property type="term" value="C:ribonucleoprotein complex"/>
    <property type="evidence" value="ECO:0007669"/>
    <property type="project" value="UniProtKB-KW"/>
</dbReference>
<dbReference type="GO" id="GO:0005840">
    <property type="term" value="C:ribosome"/>
    <property type="evidence" value="ECO:0007669"/>
    <property type="project" value="UniProtKB-KW"/>
</dbReference>
<dbReference type="GO" id="GO:0046872">
    <property type="term" value="F:metal ion binding"/>
    <property type="evidence" value="ECO:0007669"/>
    <property type="project" value="UniProtKB-KW"/>
</dbReference>
<dbReference type="GO" id="GO:0019843">
    <property type="term" value="F:rRNA binding"/>
    <property type="evidence" value="ECO:0007669"/>
    <property type="project" value="UniProtKB-KW"/>
</dbReference>
<dbReference type="GO" id="GO:0003735">
    <property type="term" value="F:structural constituent of ribosome"/>
    <property type="evidence" value="ECO:0007669"/>
    <property type="project" value="InterPro"/>
</dbReference>
<dbReference type="GO" id="GO:0006412">
    <property type="term" value="P:translation"/>
    <property type="evidence" value="ECO:0007669"/>
    <property type="project" value="UniProtKB-UniRule"/>
</dbReference>
<dbReference type="Gene3D" id="4.10.830.30">
    <property type="entry name" value="Ribosomal protein L31"/>
    <property type="match status" value="1"/>
</dbReference>
<dbReference type="HAMAP" id="MF_00501">
    <property type="entry name" value="Ribosomal_bL31_1"/>
    <property type="match status" value="1"/>
</dbReference>
<dbReference type="InterPro" id="IPR034704">
    <property type="entry name" value="Ribosomal_bL28/bL31-like_sf"/>
</dbReference>
<dbReference type="InterPro" id="IPR002150">
    <property type="entry name" value="Ribosomal_bL31"/>
</dbReference>
<dbReference type="InterPro" id="IPR027491">
    <property type="entry name" value="Ribosomal_bL31_A"/>
</dbReference>
<dbReference type="InterPro" id="IPR042105">
    <property type="entry name" value="Ribosomal_bL31_sf"/>
</dbReference>
<dbReference type="NCBIfam" id="TIGR00105">
    <property type="entry name" value="L31"/>
    <property type="match status" value="1"/>
</dbReference>
<dbReference type="NCBIfam" id="NF000612">
    <property type="entry name" value="PRK00019.1"/>
    <property type="match status" value="1"/>
</dbReference>
<dbReference type="NCBIfam" id="NF001809">
    <property type="entry name" value="PRK00528.1"/>
    <property type="match status" value="1"/>
</dbReference>
<dbReference type="PANTHER" id="PTHR33280">
    <property type="entry name" value="50S RIBOSOMAL PROTEIN L31, CHLOROPLASTIC"/>
    <property type="match status" value="1"/>
</dbReference>
<dbReference type="PANTHER" id="PTHR33280:SF1">
    <property type="entry name" value="LARGE RIBOSOMAL SUBUNIT PROTEIN BL31C"/>
    <property type="match status" value="1"/>
</dbReference>
<dbReference type="Pfam" id="PF01197">
    <property type="entry name" value="Ribosomal_L31"/>
    <property type="match status" value="1"/>
</dbReference>
<dbReference type="PRINTS" id="PR01249">
    <property type="entry name" value="RIBOSOMALL31"/>
</dbReference>
<dbReference type="SUPFAM" id="SSF143800">
    <property type="entry name" value="L28p-like"/>
    <property type="match status" value="1"/>
</dbReference>
<dbReference type="PROSITE" id="PS01143">
    <property type="entry name" value="RIBOSOMAL_L31"/>
    <property type="match status" value="1"/>
</dbReference>
<reference key="1">
    <citation type="submission" date="2006-12" db="EMBL/GenBank/DDBJ databases">
        <title>Complete sequence of chromosome of Mycobacterium sp. KMS.</title>
        <authorList>
            <consortium name="US DOE Joint Genome Institute"/>
            <person name="Copeland A."/>
            <person name="Lucas S."/>
            <person name="Lapidus A."/>
            <person name="Barry K."/>
            <person name="Detter J.C."/>
            <person name="Glavina del Rio T."/>
            <person name="Hammon N."/>
            <person name="Israni S."/>
            <person name="Dalin E."/>
            <person name="Tice H."/>
            <person name="Pitluck S."/>
            <person name="Kiss H."/>
            <person name="Brettin T."/>
            <person name="Bruce D."/>
            <person name="Han C."/>
            <person name="Tapia R."/>
            <person name="Gilna P."/>
            <person name="Schmutz J."/>
            <person name="Larimer F."/>
            <person name="Land M."/>
            <person name="Hauser L."/>
            <person name="Kyrpides N."/>
            <person name="Mikhailova N."/>
            <person name="Miller C.D."/>
            <person name="Richardson P."/>
        </authorList>
    </citation>
    <scope>NUCLEOTIDE SEQUENCE [LARGE SCALE GENOMIC DNA]</scope>
    <source>
        <strain>KMS</strain>
    </source>
</reference>
<proteinExistence type="inferred from homology"/>
<gene>
    <name evidence="1" type="primary">rpmE</name>
    <name type="ordered locus">Mkms_3962</name>
</gene>
<comment type="function">
    <text evidence="1">Binds the 23S rRNA.</text>
</comment>
<comment type="cofactor">
    <cofactor evidence="1">
        <name>Zn(2+)</name>
        <dbReference type="ChEBI" id="CHEBI:29105"/>
    </cofactor>
    <text evidence="1">Binds 1 zinc ion per subunit.</text>
</comment>
<comment type="subunit">
    <text evidence="1">Part of the 50S ribosomal subunit.</text>
</comment>
<comment type="similarity">
    <text evidence="1">Belongs to the bacterial ribosomal protein bL31 family. Type A subfamily.</text>
</comment>
<accession>A1UJZ6</accession>
<keyword id="KW-0479">Metal-binding</keyword>
<keyword id="KW-0687">Ribonucleoprotein</keyword>
<keyword id="KW-0689">Ribosomal protein</keyword>
<keyword id="KW-0694">RNA-binding</keyword>
<keyword id="KW-0699">rRNA-binding</keyword>
<keyword id="KW-0862">Zinc</keyword>
<feature type="chain" id="PRO_1000126668" description="Large ribosomal subunit protein bL31">
    <location>
        <begin position="1"/>
        <end position="81"/>
    </location>
</feature>
<feature type="binding site" evidence="1">
    <location>
        <position position="16"/>
    </location>
    <ligand>
        <name>Zn(2+)</name>
        <dbReference type="ChEBI" id="CHEBI:29105"/>
    </ligand>
</feature>
<feature type="binding site" evidence="1">
    <location>
        <position position="18"/>
    </location>
    <ligand>
        <name>Zn(2+)</name>
        <dbReference type="ChEBI" id="CHEBI:29105"/>
    </ligand>
</feature>
<feature type="binding site" evidence="1">
    <location>
        <position position="38"/>
    </location>
    <ligand>
        <name>Zn(2+)</name>
        <dbReference type="ChEBI" id="CHEBI:29105"/>
    </ligand>
</feature>
<feature type="binding site" evidence="1">
    <location>
        <position position="41"/>
    </location>
    <ligand>
        <name>Zn(2+)</name>
        <dbReference type="ChEBI" id="CHEBI:29105"/>
    </ligand>
</feature>
<evidence type="ECO:0000255" key="1">
    <source>
        <dbReference type="HAMAP-Rule" id="MF_00501"/>
    </source>
</evidence>
<evidence type="ECO:0000305" key="2"/>
<organism>
    <name type="scientific">Mycobacterium sp. (strain KMS)</name>
    <dbReference type="NCBI Taxonomy" id="189918"/>
    <lineage>
        <taxon>Bacteria</taxon>
        <taxon>Bacillati</taxon>
        <taxon>Actinomycetota</taxon>
        <taxon>Actinomycetes</taxon>
        <taxon>Mycobacteriales</taxon>
        <taxon>Mycobacteriaceae</taxon>
        <taxon>Mycobacterium</taxon>
    </lineage>
</organism>
<name>RL31_MYCSK</name>